<organism>
    <name type="scientific">Petrotoga mobilis (strain DSM 10674 / SJ95)</name>
    <dbReference type="NCBI Taxonomy" id="403833"/>
    <lineage>
        <taxon>Bacteria</taxon>
        <taxon>Thermotogati</taxon>
        <taxon>Thermotogota</taxon>
        <taxon>Thermotogae</taxon>
        <taxon>Petrotogales</taxon>
        <taxon>Petrotogaceae</taxon>
        <taxon>Petrotoga</taxon>
    </lineage>
</organism>
<reference key="1">
    <citation type="submission" date="2007-11" db="EMBL/GenBank/DDBJ databases">
        <title>Complete sequence of Petroga mobilis SJ95.</title>
        <authorList>
            <consortium name="US DOE Joint Genome Institute"/>
            <person name="Copeland A."/>
            <person name="Lucas S."/>
            <person name="Lapidus A."/>
            <person name="Barry K."/>
            <person name="Glavina del Rio T."/>
            <person name="Dalin E."/>
            <person name="Tice H."/>
            <person name="Pitluck S."/>
            <person name="Meincke L."/>
            <person name="Brettin T."/>
            <person name="Bruce D."/>
            <person name="Detter J.C."/>
            <person name="Han C."/>
            <person name="Kuske C.R."/>
            <person name="Schmutz J."/>
            <person name="Larimer F."/>
            <person name="Land M."/>
            <person name="Hauser L."/>
            <person name="Kyrpides N."/>
            <person name="Mikhailova N."/>
            <person name="Noll K."/>
            <person name="Richardson P."/>
        </authorList>
    </citation>
    <scope>NUCLEOTIDE SEQUENCE [LARGE SCALE GENOMIC DNA]</scope>
    <source>
        <strain>DSM 10674 / SJ95</strain>
    </source>
</reference>
<sequence>MEINVAKRTGFCSGVQKTYNEVKNSLVDKNKIYIYGELVHNRKVIEELNSAGAITITGMDDIPDDSIDETLIIRAHGISKAEKDLLKKRFSKVIDMTCPIVTNLVKYVEKKQKDGFFVVVYGKPDHPEILGLKGNVDESKLLITLSPVTIPQKKVLIVSQTTMGEEEYKNFITSILTINSFTEVLIRDTICSETILREKETLELSQKSTLMLVLGGKNSSNTQKLYRISKKYCKRTYHIESGEELKEITISPQDKIGIVTGSSTPTSELNKVLEYLSQEKEDFS</sequence>
<comment type="function">
    <text evidence="1">Catalyzes the conversion of 1-hydroxy-2-methyl-2-(E)-butenyl 4-diphosphate (HMBPP) into a mixture of isopentenyl diphosphate (IPP) and dimethylallyl diphosphate (DMAPP). Acts in the terminal step of the DOXP/MEP pathway for isoprenoid precursor biosynthesis.</text>
</comment>
<comment type="catalytic activity">
    <reaction evidence="1">
        <text>isopentenyl diphosphate + 2 oxidized [2Fe-2S]-[ferredoxin] + H2O = (2E)-4-hydroxy-3-methylbut-2-enyl diphosphate + 2 reduced [2Fe-2S]-[ferredoxin] + 2 H(+)</text>
        <dbReference type="Rhea" id="RHEA:24488"/>
        <dbReference type="Rhea" id="RHEA-COMP:10000"/>
        <dbReference type="Rhea" id="RHEA-COMP:10001"/>
        <dbReference type="ChEBI" id="CHEBI:15377"/>
        <dbReference type="ChEBI" id="CHEBI:15378"/>
        <dbReference type="ChEBI" id="CHEBI:33737"/>
        <dbReference type="ChEBI" id="CHEBI:33738"/>
        <dbReference type="ChEBI" id="CHEBI:128753"/>
        <dbReference type="ChEBI" id="CHEBI:128769"/>
        <dbReference type="EC" id="1.17.7.4"/>
    </reaction>
</comment>
<comment type="catalytic activity">
    <reaction evidence="1">
        <text>dimethylallyl diphosphate + 2 oxidized [2Fe-2S]-[ferredoxin] + H2O = (2E)-4-hydroxy-3-methylbut-2-enyl diphosphate + 2 reduced [2Fe-2S]-[ferredoxin] + 2 H(+)</text>
        <dbReference type="Rhea" id="RHEA:24825"/>
        <dbReference type="Rhea" id="RHEA-COMP:10000"/>
        <dbReference type="Rhea" id="RHEA-COMP:10001"/>
        <dbReference type="ChEBI" id="CHEBI:15377"/>
        <dbReference type="ChEBI" id="CHEBI:15378"/>
        <dbReference type="ChEBI" id="CHEBI:33737"/>
        <dbReference type="ChEBI" id="CHEBI:33738"/>
        <dbReference type="ChEBI" id="CHEBI:57623"/>
        <dbReference type="ChEBI" id="CHEBI:128753"/>
        <dbReference type="EC" id="1.17.7.4"/>
    </reaction>
</comment>
<comment type="cofactor">
    <cofactor evidence="1">
        <name>[4Fe-4S] cluster</name>
        <dbReference type="ChEBI" id="CHEBI:49883"/>
    </cofactor>
    <text evidence="1">Binds 1 [4Fe-4S] cluster per subunit.</text>
</comment>
<comment type="pathway">
    <text evidence="1">Isoprenoid biosynthesis; dimethylallyl diphosphate biosynthesis; dimethylallyl diphosphate from (2E)-4-hydroxy-3-methylbutenyl diphosphate: step 1/1.</text>
</comment>
<comment type="pathway">
    <text evidence="1">Isoprenoid biosynthesis; isopentenyl diphosphate biosynthesis via DXP pathway; isopentenyl diphosphate from 1-deoxy-D-xylulose 5-phosphate: step 6/6.</text>
</comment>
<comment type="similarity">
    <text evidence="1">Belongs to the IspH family.</text>
</comment>
<proteinExistence type="inferred from homology"/>
<gene>
    <name evidence="1" type="primary">ispH</name>
    <name type="ordered locus">Pmob_1619</name>
</gene>
<name>ISPH_PETMO</name>
<evidence type="ECO:0000255" key="1">
    <source>
        <dbReference type="HAMAP-Rule" id="MF_00191"/>
    </source>
</evidence>
<keyword id="KW-0004">4Fe-4S</keyword>
<keyword id="KW-0408">Iron</keyword>
<keyword id="KW-0411">Iron-sulfur</keyword>
<keyword id="KW-0414">Isoprene biosynthesis</keyword>
<keyword id="KW-0479">Metal-binding</keyword>
<keyword id="KW-0560">Oxidoreductase</keyword>
<accession>A9BGS3</accession>
<feature type="chain" id="PRO_1000077522" description="4-hydroxy-3-methylbut-2-enyl diphosphate reductase">
    <location>
        <begin position="1"/>
        <end position="284"/>
    </location>
</feature>
<feature type="active site" description="Proton donor" evidence="1">
    <location>
        <position position="128"/>
    </location>
</feature>
<feature type="binding site" evidence="1">
    <location>
        <position position="12"/>
    </location>
    <ligand>
        <name>[4Fe-4S] cluster</name>
        <dbReference type="ChEBI" id="CHEBI:49883"/>
    </ligand>
</feature>
<feature type="binding site" evidence="1">
    <location>
        <position position="40"/>
    </location>
    <ligand>
        <name>(2E)-4-hydroxy-3-methylbut-2-enyl diphosphate</name>
        <dbReference type="ChEBI" id="CHEBI:128753"/>
    </ligand>
</feature>
<feature type="binding site" evidence="1">
    <location>
        <position position="40"/>
    </location>
    <ligand>
        <name>dimethylallyl diphosphate</name>
        <dbReference type="ChEBI" id="CHEBI:57623"/>
    </ligand>
</feature>
<feature type="binding site" evidence="1">
    <location>
        <position position="40"/>
    </location>
    <ligand>
        <name>isopentenyl diphosphate</name>
        <dbReference type="ChEBI" id="CHEBI:128769"/>
    </ligand>
</feature>
<feature type="binding site" evidence="1">
    <location>
        <position position="76"/>
    </location>
    <ligand>
        <name>(2E)-4-hydroxy-3-methylbut-2-enyl diphosphate</name>
        <dbReference type="ChEBI" id="CHEBI:128753"/>
    </ligand>
</feature>
<feature type="binding site" evidence="1">
    <location>
        <position position="76"/>
    </location>
    <ligand>
        <name>dimethylallyl diphosphate</name>
        <dbReference type="ChEBI" id="CHEBI:57623"/>
    </ligand>
</feature>
<feature type="binding site" evidence="1">
    <location>
        <position position="76"/>
    </location>
    <ligand>
        <name>isopentenyl diphosphate</name>
        <dbReference type="ChEBI" id="CHEBI:128769"/>
    </ligand>
</feature>
<feature type="binding site" evidence="1">
    <location>
        <position position="98"/>
    </location>
    <ligand>
        <name>[4Fe-4S] cluster</name>
        <dbReference type="ChEBI" id="CHEBI:49883"/>
    </ligand>
</feature>
<feature type="binding site" evidence="1">
    <location>
        <position position="126"/>
    </location>
    <ligand>
        <name>(2E)-4-hydroxy-3-methylbut-2-enyl diphosphate</name>
        <dbReference type="ChEBI" id="CHEBI:128753"/>
    </ligand>
</feature>
<feature type="binding site" evidence="1">
    <location>
        <position position="126"/>
    </location>
    <ligand>
        <name>dimethylallyl diphosphate</name>
        <dbReference type="ChEBI" id="CHEBI:57623"/>
    </ligand>
</feature>
<feature type="binding site" evidence="1">
    <location>
        <position position="126"/>
    </location>
    <ligand>
        <name>isopentenyl diphosphate</name>
        <dbReference type="ChEBI" id="CHEBI:128769"/>
    </ligand>
</feature>
<feature type="binding site" evidence="1">
    <location>
        <position position="161"/>
    </location>
    <ligand>
        <name>(2E)-4-hydroxy-3-methylbut-2-enyl diphosphate</name>
        <dbReference type="ChEBI" id="CHEBI:128753"/>
    </ligand>
</feature>
<feature type="binding site" evidence="1">
    <location>
        <position position="191"/>
    </location>
    <ligand>
        <name>[4Fe-4S] cluster</name>
        <dbReference type="ChEBI" id="CHEBI:49883"/>
    </ligand>
</feature>
<feature type="binding site" evidence="1">
    <location>
        <position position="219"/>
    </location>
    <ligand>
        <name>(2E)-4-hydroxy-3-methylbut-2-enyl diphosphate</name>
        <dbReference type="ChEBI" id="CHEBI:128753"/>
    </ligand>
</feature>
<feature type="binding site" evidence="1">
    <location>
        <position position="219"/>
    </location>
    <ligand>
        <name>dimethylallyl diphosphate</name>
        <dbReference type="ChEBI" id="CHEBI:57623"/>
    </ligand>
</feature>
<feature type="binding site" evidence="1">
    <location>
        <position position="219"/>
    </location>
    <ligand>
        <name>isopentenyl diphosphate</name>
        <dbReference type="ChEBI" id="CHEBI:128769"/>
    </ligand>
</feature>
<feature type="binding site" evidence="1">
    <location>
        <position position="220"/>
    </location>
    <ligand>
        <name>(2E)-4-hydroxy-3-methylbut-2-enyl diphosphate</name>
        <dbReference type="ChEBI" id="CHEBI:128753"/>
    </ligand>
</feature>
<feature type="binding site" evidence="1">
    <location>
        <position position="220"/>
    </location>
    <ligand>
        <name>dimethylallyl diphosphate</name>
        <dbReference type="ChEBI" id="CHEBI:57623"/>
    </ligand>
</feature>
<feature type="binding site" evidence="1">
    <location>
        <position position="220"/>
    </location>
    <ligand>
        <name>isopentenyl diphosphate</name>
        <dbReference type="ChEBI" id="CHEBI:128769"/>
    </ligand>
</feature>
<feature type="binding site" evidence="1">
    <location>
        <position position="221"/>
    </location>
    <ligand>
        <name>(2E)-4-hydroxy-3-methylbut-2-enyl diphosphate</name>
        <dbReference type="ChEBI" id="CHEBI:128753"/>
    </ligand>
</feature>
<feature type="binding site" evidence="1">
    <location>
        <position position="221"/>
    </location>
    <ligand>
        <name>dimethylallyl diphosphate</name>
        <dbReference type="ChEBI" id="CHEBI:57623"/>
    </ligand>
</feature>
<feature type="binding site" evidence="1">
    <location>
        <position position="221"/>
    </location>
    <ligand>
        <name>isopentenyl diphosphate</name>
        <dbReference type="ChEBI" id="CHEBI:128769"/>
    </ligand>
</feature>
<feature type="binding site" evidence="1">
    <location>
        <position position="263"/>
    </location>
    <ligand>
        <name>(2E)-4-hydroxy-3-methylbut-2-enyl diphosphate</name>
        <dbReference type="ChEBI" id="CHEBI:128753"/>
    </ligand>
</feature>
<feature type="binding site" evidence="1">
    <location>
        <position position="263"/>
    </location>
    <ligand>
        <name>dimethylallyl diphosphate</name>
        <dbReference type="ChEBI" id="CHEBI:57623"/>
    </ligand>
</feature>
<feature type="binding site" evidence="1">
    <location>
        <position position="263"/>
    </location>
    <ligand>
        <name>isopentenyl diphosphate</name>
        <dbReference type="ChEBI" id="CHEBI:128769"/>
    </ligand>
</feature>
<dbReference type="EC" id="1.17.7.4" evidence="1"/>
<dbReference type="EMBL" id="CP000879">
    <property type="protein sequence ID" value="ABX32313.1"/>
    <property type="molecule type" value="Genomic_DNA"/>
</dbReference>
<dbReference type="RefSeq" id="WP_012209410.1">
    <property type="nucleotide sequence ID" value="NC_010003.1"/>
</dbReference>
<dbReference type="SMR" id="A9BGS3"/>
<dbReference type="STRING" id="403833.Pmob_1619"/>
<dbReference type="KEGG" id="pmo:Pmob_1619"/>
<dbReference type="eggNOG" id="COG0761">
    <property type="taxonomic scope" value="Bacteria"/>
</dbReference>
<dbReference type="HOGENOM" id="CLU_027486_0_1_0"/>
<dbReference type="OrthoDB" id="9777362at2"/>
<dbReference type="UniPathway" id="UPA00056">
    <property type="reaction ID" value="UER00097"/>
</dbReference>
<dbReference type="UniPathway" id="UPA00059">
    <property type="reaction ID" value="UER00105"/>
</dbReference>
<dbReference type="Proteomes" id="UP000000789">
    <property type="component" value="Chromosome"/>
</dbReference>
<dbReference type="GO" id="GO:0051539">
    <property type="term" value="F:4 iron, 4 sulfur cluster binding"/>
    <property type="evidence" value="ECO:0007669"/>
    <property type="project" value="UniProtKB-UniRule"/>
</dbReference>
<dbReference type="GO" id="GO:0051745">
    <property type="term" value="F:4-hydroxy-3-methylbut-2-enyl diphosphate reductase activity"/>
    <property type="evidence" value="ECO:0007669"/>
    <property type="project" value="UniProtKB-UniRule"/>
</dbReference>
<dbReference type="GO" id="GO:0046872">
    <property type="term" value="F:metal ion binding"/>
    <property type="evidence" value="ECO:0007669"/>
    <property type="project" value="UniProtKB-KW"/>
</dbReference>
<dbReference type="GO" id="GO:0050992">
    <property type="term" value="P:dimethylallyl diphosphate biosynthetic process"/>
    <property type="evidence" value="ECO:0007669"/>
    <property type="project" value="UniProtKB-UniRule"/>
</dbReference>
<dbReference type="GO" id="GO:0019288">
    <property type="term" value="P:isopentenyl diphosphate biosynthetic process, methylerythritol 4-phosphate pathway"/>
    <property type="evidence" value="ECO:0007669"/>
    <property type="project" value="UniProtKB-UniRule"/>
</dbReference>
<dbReference type="GO" id="GO:0016114">
    <property type="term" value="P:terpenoid biosynthetic process"/>
    <property type="evidence" value="ECO:0007669"/>
    <property type="project" value="UniProtKB-UniRule"/>
</dbReference>
<dbReference type="CDD" id="cd13944">
    <property type="entry name" value="lytB_ispH"/>
    <property type="match status" value="1"/>
</dbReference>
<dbReference type="Gene3D" id="3.40.50.11270">
    <property type="match status" value="1"/>
</dbReference>
<dbReference type="Gene3D" id="3.40.1010.20">
    <property type="entry name" value="4-hydroxy-3-methylbut-2-enyl diphosphate reductase, catalytic domain"/>
    <property type="match status" value="2"/>
</dbReference>
<dbReference type="HAMAP" id="MF_00191">
    <property type="entry name" value="IspH"/>
    <property type="match status" value="1"/>
</dbReference>
<dbReference type="InterPro" id="IPR003451">
    <property type="entry name" value="LytB/IspH"/>
</dbReference>
<dbReference type="NCBIfam" id="TIGR00216">
    <property type="entry name" value="ispH_lytB"/>
    <property type="match status" value="1"/>
</dbReference>
<dbReference type="PANTHER" id="PTHR30426">
    <property type="entry name" value="4-HYDROXY-3-METHYLBUT-2-ENYL DIPHOSPHATE REDUCTASE"/>
    <property type="match status" value="1"/>
</dbReference>
<dbReference type="PANTHER" id="PTHR30426:SF0">
    <property type="entry name" value="4-HYDROXY-3-METHYLBUT-2-ENYL DIPHOSPHATE REDUCTASE"/>
    <property type="match status" value="1"/>
</dbReference>
<dbReference type="Pfam" id="PF02401">
    <property type="entry name" value="LYTB"/>
    <property type="match status" value="1"/>
</dbReference>
<protein>
    <recommendedName>
        <fullName evidence="1">4-hydroxy-3-methylbut-2-enyl diphosphate reductase</fullName>
        <shortName evidence="1">HMBPP reductase</shortName>
        <ecNumber evidence="1">1.17.7.4</ecNumber>
    </recommendedName>
</protein>